<comment type="similarity">
    <text evidence="1">Belongs to the bacterial ribosomal protein bL32 family.</text>
</comment>
<feature type="chain" id="PRO_1000195957" description="Large ribosomal subunit protein bL32">
    <location>
        <begin position="1"/>
        <end position="57"/>
    </location>
</feature>
<protein>
    <recommendedName>
        <fullName evidence="1">Large ribosomal subunit protein bL32</fullName>
    </recommendedName>
    <alternativeName>
        <fullName evidence="2">50S ribosomal protein L32</fullName>
    </alternativeName>
</protein>
<proteinExistence type="inferred from homology"/>
<evidence type="ECO:0000255" key="1">
    <source>
        <dbReference type="HAMAP-Rule" id="MF_00340"/>
    </source>
</evidence>
<evidence type="ECO:0000305" key="2"/>
<gene>
    <name evidence="1" type="primary">rpmF</name>
    <name type="ordered locus">BAMEG_0565</name>
</gene>
<dbReference type="EMBL" id="CP001215">
    <property type="protein sequence ID" value="ACP13132.1"/>
    <property type="molecule type" value="Genomic_DNA"/>
</dbReference>
<dbReference type="RefSeq" id="WP_001984764.1">
    <property type="nucleotide sequence ID" value="NC_012581.1"/>
</dbReference>
<dbReference type="SMR" id="C3L6E8"/>
<dbReference type="GeneID" id="93007188"/>
<dbReference type="KEGG" id="bah:BAMEG_0565"/>
<dbReference type="HOGENOM" id="CLU_129084_1_3_9"/>
<dbReference type="GO" id="GO:0015934">
    <property type="term" value="C:large ribosomal subunit"/>
    <property type="evidence" value="ECO:0007669"/>
    <property type="project" value="InterPro"/>
</dbReference>
<dbReference type="GO" id="GO:0003735">
    <property type="term" value="F:structural constituent of ribosome"/>
    <property type="evidence" value="ECO:0007669"/>
    <property type="project" value="InterPro"/>
</dbReference>
<dbReference type="GO" id="GO:0006412">
    <property type="term" value="P:translation"/>
    <property type="evidence" value="ECO:0007669"/>
    <property type="project" value="UniProtKB-UniRule"/>
</dbReference>
<dbReference type="HAMAP" id="MF_00340">
    <property type="entry name" value="Ribosomal_bL32"/>
    <property type="match status" value="1"/>
</dbReference>
<dbReference type="InterPro" id="IPR002677">
    <property type="entry name" value="Ribosomal_bL32"/>
</dbReference>
<dbReference type="InterPro" id="IPR044957">
    <property type="entry name" value="Ribosomal_bL32_bact"/>
</dbReference>
<dbReference type="InterPro" id="IPR011332">
    <property type="entry name" value="Ribosomal_zn-bd"/>
</dbReference>
<dbReference type="NCBIfam" id="TIGR01031">
    <property type="entry name" value="rpmF_bact"/>
    <property type="match status" value="1"/>
</dbReference>
<dbReference type="PANTHER" id="PTHR35534">
    <property type="entry name" value="50S RIBOSOMAL PROTEIN L32"/>
    <property type="match status" value="1"/>
</dbReference>
<dbReference type="PANTHER" id="PTHR35534:SF2">
    <property type="entry name" value="LARGE RIBOSOMAL SUBUNIT PROTEIN BL32"/>
    <property type="match status" value="1"/>
</dbReference>
<dbReference type="Pfam" id="PF01783">
    <property type="entry name" value="Ribosomal_L32p"/>
    <property type="match status" value="1"/>
</dbReference>
<dbReference type="SUPFAM" id="SSF57829">
    <property type="entry name" value="Zn-binding ribosomal proteins"/>
    <property type="match status" value="1"/>
</dbReference>
<reference key="1">
    <citation type="submission" date="2008-10" db="EMBL/GenBank/DDBJ databases">
        <title>Genome sequence of Bacillus anthracis str. CDC 684.</title>
        <authorList>
            <person name="Dodson R.J."/>
            <person name="Munk A.C."/>
            <person name="Brettin T."/>
            <person name="Bruce D."/>
            <person name="Detter C."/>
            <person name="Tapia R."/>
            <person name="Han C."/>
            <person name="Sutton G."/>
            <person name="Sims D."/>
        </authorList>
    </citation>
    <scope>NUCLEOTIDE SEQUENCE [LARGE SCALE GENOMIC DNA]</scope>
    <source>
        <strain>CDC 684 / NRRL 3495</strain>
    </source>
</reference>
<name>RL32_BACAC</name>
<keyword id="KW-0687">Ribonucleoprotein</keyword>
<keyword id="KW-0689">Ribosomal protein</keyword>
<accession>C3L6E8</accession>
<sequence>MAVPFRRTSKTVKRKRRTHFKLSVPGMVECPSCGEAKLAHRVCKACGTYKGKEVISK</sequence>
<organism>
    <name type="scientific">Bacillus anthracis (strain CDC 684 / NRRL 3495)</name>
    <dbReference type="NCBI Taxonomy" id="568206"/>
    <lineage>
        <taxon>Bacteria</taxon>
        <taxon>Bacillati</taxon>
        <taxon>Bacillota</taxon>
        <taxon>Bacilli</taxon>
        <taxon>Bacillales</taxon>
        <taxon>Bacillaceae</taxon>
        <taxon>Bacillus</taxon>
        <taxon>Bacillus cereus group</taxon>
    </lineage>
</organism>